<comment type="function">
    <text evidence="1">Binds to the 50S ribosomal subunit and prevents its association with the 30S ribosomal subunit to form the 70S initiation complex.</text>
</comment>
<comment type="similarity">
    <text evidence="1">Belongs to the eIF-6 family.</text>
</comment>
<proteinExistence type="inferred from homology"/>
<evidence type="ECO:0000255" key="1">
    <source>
        <dbReference type="HAMAP-Rule" id="MF_00032"/>
    </source>
</evidence>
<accession>A6UR54</accession>
<feature type="chain" id="PRO_1000002603" description="Translation initiation factor 6">
    <location>
        <begin position="1"/>
        <end position="227"/>
    </location>
</feature>
<protein>
    <recommendedName>
        <fullName evidence="1">Translation initiation factor 6</fullName>
        <shortName evidence="1">aIF-6</shortName>
    </recommendedName>
</protein>
<dbReference type="EMBL" id="CP000742">
    <property type="protein sequence ID" value="ABR54976.1"/>
    <property type="molecule type" value="Genomic_DNA"/>
</dbReference>
<dbReference type="RefSeq" id="WP_012065891.1">
    <property type="nucleotide sequence ID" value="NC_009634.1"/>
</dbReference>
<dbReference type="SMR" id="A6UR54"/>
<dbReference type="STRING" id="406327.Mevan_1076"/>
<dbReference type="GeneID" id="5325349"/>
<dbReference type="KEGG" id="mvn:Mevan_1076"/>
<dbReference type="eggNOG" id="arCOG04176">
    <property type="taxonomic scope" value="Archaea"/>
</dbReference>
<dbReference type="HOGENOM" id="CLU_071894_1_0_2"/>
<dbReference type="OrthoDB" id="33582at2157"/>
<dbReference type="Proteomes" id="UP000001107">
    <property type="component" value="Chromosome"/>
</dbReference>
<dbReference type="GO" id="GO:0043022">
    <property type="term" value="F:ribosome binding"/>
    <property type="evidence" value="ECO:0007669"/>
    <property type="project" value="InterPro"/>
</dbReference>
<dbReference type="GO" id="GO:0003743">
    <property type="term" value="F:translation initiation factor activity"/>
    <property type="evidence" value="ECO:0007669"/>
    <property type="project" value="UniProtKB-UniRule"/>
</dbReference>
<dbReference type="GO" id="GO:0042256">
    <property type="term" value="P:cytosolic ribosome assembly"/>
    <property type="evidence" value="ECO:0007669"/>
    <property type="project" value="InterPro"/>
</dbReference>
<dbReference type="Gene3D" id="3.75.10.10">
    <property type="entry name" value="L-arginine/glycine Amidinotransferase, Chain A"/>
    <property type="match status" value="1"/>
</dbReference>
<dbReference type="HAMAP" id="MF_00032">
    <property type="entry name" value="eIF_6"/>
    <property type="match status" value="1"/>
</dbReference>
<dbReference type="InterPro" id="IPR002769">
    <property type="entry name" value="eIF6"/>
</dbReference>
<dbReference type="NCBIfam" id="TIGR00323">
    <property type="entry name" value="eIF-6"/>
    <property type="match status" value="1"/>
</dbReference>
<dbReference type="NCBIfam" id="NF003127">
    <property type="entry name" value="PRK04046.1-3"/>
    <property type="match status" value="1"/>
</dbReference>
<dbReference type="PANTHER" id="PTHR10784">
    <property type="entry name" value="TRANSLATION INITIATION FACTOR 6"/>
    <property type="match status" value="1"/>
</dbReference>
<dbReference type="Pfam" id="PF01912">
    <property type="entry name" value="eIF-6"/>
    <property type="match status" value="1"/>
</dbReference>
<dbReference type="PIRSF" id="PIRSF006413">
    <property type="entry name" value="IF-6"/>
    <property type="match status" value="1"/>
</dbReference>
<dbReference type="SMART" id="SM00654">
    <property type="entry name" value="eIF6"/>
    <property type="match status" value="1"/>
</dbReference>
<dbReference type="SUPFAM" id="SSF55909">
    <property type="entry name" value="Pentein"/>
    <property type="match status" value="1"/>
</dbReference>
<gene>
    <name evidence="1" type="primary">eif6</name>
    <name type="ordered locus">Mevan_1076</name>
</gene>
<reference key="1">
    <citation type="submission" date="2007-06" db="EMBL/GenBank/DDBJ databases">
        <title>Complete sequence of Methanococcus vannielii SB.</title>
        <authorList>
            <consortium name="US DOE Joint Genome Institute"/>
            <person name="Copeland A."/>
            <person name="Lucas S."/>
            <person name="Lapidus A."/>
            <person name="Barry K."/>
            <person name="Glavina del Rio T."/>
            <person name="Dalin E."/>
            <person name="Tice H."/>
            <person name="Pitluck S."/>
            <person name="Chain P."/>
            <person name="Malfatti S."/>
            <person name="Shin M."/>
            <person name="Vergez L."/>
            <person name="Schmutz J."/>
            <person name="Larimer F."/>
            <person name="Land M."/>
            <person name="Hauser L."/>
            <person name="Kyrpides N."/>
            <person name="Anderson I."/>
            <person name="Sieprawska-Lupa M."/>
            <person name="Whitman W.B."/>
            <person name="Richardson P."/>
        </authorList>
    </citation>
    <scope>NUCLEOTIDE SEQUENCE [LARGE SCALE GENOMIC DNA]</scope>
    <source>
        <strain>ATCC 35089 / DSM 1224 / JCM 13029 / OCM 148 / SB</strain>
    </source>
</reference>
<keyword id="KW-0396">Initiation factor</keyword>
<keyword id="KW-0648">Protein biosynthesis</keyword>
<organism>
    <name type="scientific">Methanococcus vannielii (strain ATCC 35089 / DSM 1224 / JCM 13029 / OCM 148 / SB)</name>
    <dbReference type="NCBI Taxonomy" id="406327"/>
    <lineage>
        <taxon>Archaea</taxon>
        <taxon>Methanobacteriati</taxon>
        <taxon>Methanobacteriota</taxon>
        <taxon>Methanomada group</taxon>
        <taxon>Methanococci</taxon>
        <taxon>Methanococcales</taxon>
        <taxon>Methanococcaceae</taxon>
        <taxon>Methanococcus</taxon>
    </lineage>
</organism>
<sequence>MIIKTYFSGVSTIGVLSLATEDYGLFPLSVEKNTLEKMKEVLNIPVTQLNISNSSLIGSLCVGNSNGLLVPNIVTSKEIALIKDFLKENSLDVNLEKLKAKNTAFGNLILTNNKGCIISEELQNFRKVIEDVLGVESGVGNYASLPTVGSNGVATDKGCLVHPLTDELELEWITDVLKVDYVGRGTANRGVTSVGSCILANTKGAVIGGDTSGPELLKIEEALDLID</sequence>
<name>IF6_METVS</name>